<evidence type="ECO:0000269" key="1">
    <source>
    </source>
</evidence>
<evidence type="ECO:0000305" key="2"/>
<evidence type="ECO:0007829" key="3">
    <source>
        <dbReference type="PDB" id="1MPG"/>
    </source>
</evidence>
<evidence type="ECO:0007829" key="4">
    <source>
        <dbReference type="PDB" id="1PVS"/>
    </source>
</evidence>
<evidence type="ECO:0007829" key="5">
    <source>
        <dbReference type="PDB" id="3CW7"/>
    </source>
</evidence>
<gene>
    <name type="primary">alkA</name>
    <name type="synonym">aidA</name>
    <name type="ordered locus">b2068</name>
    <name type="ordered locus">JW2053</name>
</gene>
<organism>
    <name type="scientific">Escherichia coli (strain K12)</name>
    <dbReference type="NCBI Taxonomy" id="83333"/>
    <lineage>
        <taxon>Bacteria</taxon>
        <taxon>Pseudomonadati</taxon>
        <taxon>Pseudomonadota</taxon>
        <taxon>Gammaproteobacteria</taxon>
        <taxon>Enterobacterales</taxon>
        <taxon>Enterobacteriaceae</taxon>
        <taxon>Escherichia</taxon>
    </lineage>
</organism>
<comment type="function">
    <text>Hydrolysis of the deoxyribose N-glycosidic bond to excise 3-methyladenine, 3-methylguanine, 7-methylguanine, O2-methylthymine, and O2-methylcytosine from the damaged DNA polymer formed by alkylation lesions.</text>
</comment>
<comment type="catalytic activity">
    <reaction>
        <text>Hydrolysis of alkylated DNA, releasing 3-methyladenine, 3-methylguanine, 7-methylguanine and 7-methyladenine.</text>
        <dbReference type="EC" id="3.2.2.21"/>
    </reaction>
</comment>
<comment type="subunit">
    <text>Monomer.</text>
</comment>
<comment type="interaction">
    <interactant intactId="EBI-544077">
        <id>P04395</id>
    </interactant>
    <interactant intactId="EBI-542707">
        <id>P06959</id>
        <label>aceF</label>
    </interactant>
    <organismsDiffer>false</organismsDiffer>
    <experiments>2</experiments>
</comment>
<comment type="induction">
    <text>Up-regulated by methylated Ada in response to the exposure to alkylating agents.</text>
</comment>
<comment type="similarity">
    <text evidence="2">Belongs to the alkylbase DNA glycosidase AlkA family.</text>
</comment>
<feature type="chain" id="PRO_0000194878" description="DNA-3-methyladenine glycosylase 2">
    <location>
        <begin position="1"/>
        <end position="282"/>
    </location>
</feature>
<feature type="active site" description="Proton acceptor">
    <location>
        <position position="238"/>
    </location>
</feature>
<feature type="site" description="Determinant for substrate specificity and/or activity">
    <location>
        <position position="218"/>
    </location>
</feature>
<feature type="mutagenesis site" description="Methylmethane sulfonate-resistant." evidence="1">
    <original>Q</original>
    <variation>A</variation>
    <location>
        <position position="124"/>
    </location>
</feature>
<feature type="mutagenesis site" description="No catalytic activity, methylmethane sulfonate-sensitive." evidence="1">
    <original>W</original>
    <variation>A</variation>
    <location>
        <position position="218"/>
    </location>
</feature>
<feature type="mutagenesis site" description="More than 30% catalytic activity, methylmethane sulfonate-resistant." evidence="1">
    <original>D</original>
    <variation>N</variation>
    <location>
        <position position="237"/>
    </location>
</feature>
<feature type="mutagenesis site" description="No catalytic activity, methylmethane sulfonate-sensitive." evidence="1">
    <original>D</original>
    <variation>N</variation>
    <location>
        <position position="238"/>
    </location>
</feature>
<feature type="strand" evidence="3">
    <location>
        <begin position="2"/>
        <end position="5"/>
    </location>
</feature>
<feature type="helix" evidence="3">
    <location>
        <begin position="12"/>
        <end position="22"/>
    </location>
</feature>
<feature type="turn" evidence="3">
    <location>
        <begin position="25"/>
        <end position="27"/>
    </location>
</feature>
<feature type="strand" evidence="3">
    <location>
        <begin position="28"/>
        <end position="30"/>
    </location>
</feature>
<feature type="strand" evidence="3">
    <location>
        <begin position="35"/>
        <end position="41"/>
    </location>
</feature>
<feature type="strand" evidence="3">
    <location>
        <begin position="44"/>
        <end position="53"/>
    </location>
</feature>
<feature type="turn" evidence="3">
    <location>
        <begin position="54"/>
        <end position="57"/>
    </location>
</feature>
<feature type="strand" evidence="3">
    <location>
        <begin position="58"/>
        <end position="63"/>
    </location>
</feature>
<feature type="helix" evidence="3">
    <location>
        <begin position="65"/>
        <end position="70"/>
    </location>
</feature>
<feature type="helix" evidence="3">
    <location>
        <begin position="71"/>
        <end position="82"/>
    </location>
</feature>
<feature type="turn" evidence="3">
    <location>
        <begin position="83"/>
        <end position="85"/>
    </location>
</feature>
<feature type="helix" evidence="3">
    <location>
        <begin position="88"/>
        <end position="95"/>
    </location>
</feature>
<feature type="helix" evidence="3">
    <location>
        <begin position="96"/>
        <end position="99"/>
    </location>
</feature>
<feature type="helix" evidence="3">
    <location>
        <begin position="113"/>
        <end position="122"/>
    </location>
</feature>
<feature type="turn" evidence="3">
    <location>
        <begin position="123"/>
        <end position="125"/>
    </location>
</feature>
<feature type="helix" evidence="3">
    <location>
        <begin position="128"/>
        <end position="142"/>
    </location>
</feature>
<feature type="strand" evidence="5">
    <location>
        <begin position="149"/>
        <end position="153"/>
    </location>
</feature>
<feature type="helix" evidence="3">
    <location>
        <begin position="158"/>
        <end position="162"/>
    </location>
</feature>
<feature type="helix" evidence="3">
    <location>
        <begin position="166"/>
        <end position="171"/>
    </location>
</feature>
<feature type="helix" evidence="3">
    <location>
        <begin position="176"/>
        <end position="190"/>
    </location>
</feature>
<feature type="helix" evidence="3">
    <location>
        <begin position="202"/>
        <end position="209"/>
    </location>
</feature>
<feature type="helix" evidence="3">
    <location>
        <begin position="217"/>
        <end position="227"/>
    </location>
</feature>
<feature type="helix" evidence="3">
    <location>
        <begin position="239"/>
        <end position="244"/>
    </location>
</feature>
<feature type="strand" evidence="4">
    <location>
        <begin position="245"/>
        <end position="247"/>
    </location>
</feature>
<feature type="helix" evidence="3">
    <location>
        <begin position="250"/>
        <end position="257"/>
    </location>
</feature>
<feature type="helix" evidence="3">
    <location>
        <begin position="258"/>
        <end position="260"/>
    </location>
</feature>
<feature type="helix" evidence="3">
    <location>
        <begin position="264"/>
        <end position="272"/>
    </location>
</feature>
<protein>
    <recommendedName>
        <fullName>DNA-3-methyladenine glycosylase 2</fullName>
        <ecNumber>3.2.2.21</ecNumber>
    </recommendedName>
    <alternativeName>
        <fullName>3-methyladenine-DNA glycosylase II, inducible</fullName>
        <shortName>TAG II</shortName>
    </alternativeName>
    <alternativeName>
        <fullName>DNA-3-methyladenine glycosidase II</fullName>
    </alternativeName>
    <alternativeName>
        <fullName>DNA-3-methyladenine glycosylase II</fullName>
    </alternativeName>
</protein>
<name>3MG2_ECOLI</name>
<proteinExistence type="evidence at protein level"/>
<sequence>MYTLNWQPPYDWSWMLGFLAARAVSSVETVADSYYARSLAVGEYRGVVTAIPDIARHTLHINLSAGLEPVAAECLAKMSRLFDLQCNPQIVNGALGRLGAARPGLRLPGCVDAFEQGVRAILGQLVSVAMAAKLTARVAQLYGERLDDFPEYICFPTPQRLAAADPQALKALGMPLKRAEALIHLANAALEGTLPMTIPGDVEQAMKTLQTFPGIGRWTANYFALRGWQAKDVFLPDDYLIKQRFPGMTPAQIRRYAERWKPWRSYALLHIWYTEGWQPDEA</sequence>
<reference key="1">
    <citation type="journal article" date="1984" name="J. Biol. Chem.">
        <title>Structure and expression of the alkA gene of Escherichia coli involved in adaptive response to alkylating agents.</title>
        <authorList>
            <person name="Nakabeppu Y."/>
            <person name="Miyata T."/>
            <person name="Kondo H."/>
            <person name="Iwanaga S."/>
            <person name="Sekiguchi M."/>
        </authorList>
    </citation>
    <scope>NUCLEOTIDE SEQUENCE [GENOMIC DNA]</scope>
    <scope>PROTEIN SEQUENCE OF 1-12 AND 14-20</scope>
</reference>
<reference key="2">
    <citation type="journal article" date="1996" name="DNA Res.">
        <title>A 460-kb DNA sequence of the Escherichia coli K-12 genome corresponding to the 40.1-50.0 min region on the linkage map.</title>
        <authorList>
            <person name="Itoh T."/>
            <person name="Aiba H."/>
            <person name="Baba T."/>
            <person name="Fujita K."/>
            <person name="Hayashi K."/>
            <person name="Inada T."/>
            <person name="Isono K."/>
            <person name="Kasai H."/>
            <person name="Kimura S."/>
            <person name="Kitakawa M."/>
            <person name="Kitagawa M."/>
            <person name="Makino K."/>
            <person name="Miki T."/>
            <person name="Mizobuchi K."/>
            <person name="Mori H."/>
            <person name="Mori T."/>
            <person name="Motomura K."/>
            <person name="Nakade S."/>
            <person name="Nakamura Y."/>
            <person name="Nashimoto H."/>
            <person name="Nishio Y."/>
            <person name="Oshima T."/>
            <person name="Saito N."/>
            <person name="Sampei G."/>
            <person name="Seki Y."/>
            <person name="Sivasundaram S."/>
            <person name="Tagami H."/>
            <person name="Takeda J."/>
            <person name="Takemoto K."/>
            <person name="Wada C."/>
            <person name="Yamamoto Y."/>
            <person name="Horiuchi T."/>
        </authorList>
    </citation>
    <scope>NUCLEOTIDE SEQUENCE [LARGE SCALE GENOMIC DNA]</scope>
    <source>
        <strain>K12 / W3110 / ATCC 27325 / DSM 5911</strain>
    </source>
</reference>
<reference key="3">
    <citation type="journal article" date="1997" name="Science">
        <title>The complete genome sequence of Escherichia coli K-12.</title>
        <authorList>
            <person name="Blattner F.R."/>
            <person name="Plunkett G. III"/>
            <person name="Bloch C.A."/>
            <person name="Perna N.T."/>
            <person name="Burland V."/>
            <person name="Riley M."/>
            <person name="Collado-Vides J."/>
            <person name="Glasner J.D."/>
            <person name="Rode C.K."/>
            <person name="Mayhew G.F."/>
            <person name="Gregor J."/>
            <person name="Davis N.W."/>
            <person name="Kirkpatrick H.A."/>
            <person name="Goeden M.A."/>
            <person name="Rose D.J."/>
            <person name="Mau B."/>
            <person name="Shao Y."/>
        </authorList>
    </citation>
    <scope>NUCLEOTIDE SEQUENCE [LARGE SCALE GENOMIC DNA]</scope>
    <source>
        <strain>K12 / MG1655 / ATCC 47076</strain>
    </source>
</reference>
<reference key="4">
    <citation type="journal article" date="2006" name="Mol. Syst. Biol.">
        <title>Highly accurate genome sequences of Escherichia coli K-12 strains MG1655 and W3110.</title>
        <authorList>
            <person name="Hayashi K."/>
            <person name="Morooka N."/>
            <person name="Yamamoto Y."/>
            <person name="Fujita K."/>
            <person name="Isono K."/>
            <person name="Choi S."/>
            <person name="Ohtsubo E."/>
            <person name="Baba T."/>
            <person name="Wanner B.L."/>
            <person name="Mori H."/>
            <person name="Horiuchi T."/>
        </authorList>
    </citation>
    <scope>NUCLEOTIDE SEQUENCE [LARGE SCALE GENOMIC DNA]</scope>
    <source>
        <strain>K12 / W3110 / ATCC 27325 / DSM 5911</strain>
    </source>
</reference>
<reference key="5">
    <citation type="journal article" date="1984" name="J. Biol. Chem.">
        <title>Cloning and characterization of the alkA gene of Escherichia coli that encodes 3-methyladenine DNA glycosylase II.</title>
        <authorList>
            <person name="Nakabeppu Y."/>
            <person name="Kondo H."/>
            <person name="Sekiguchi M."/>
        </authorList>
    </citation>
    <scope>CHARACTERIZATION</scope>
</reference>
<reference key="6">
    <citation type="journal article" date="1986" name="Proc. Natl. Acad. Sci. U.S.A.">
        <title>Regulatory mechanisms for induction of synthesis of repair enzymes in response to alkylating agents: ada protein acts as a transcriptional regulator.</title>
        <authorList>
            <person name="Nakabeppu Y."/>
            <person name="Sekiguchi M."/>
        </authorList>
    </citation>
    <scope>NUCLEOTIDE SEQUENCE [GENOMIC DNA] OF 1-2</scope>
</reference>
<reference key="7">
    <citation type="journal article" date="1996" name="Cell">
        <title>Three-dimensional structure of a DNA repair enzyme, 3-methyladenine DNA glycosylase II, from Escherichia coli.</title>
        <authorList>
            <person name="Yamagata Y."/>
            <person name="Kato M."/>
            <person name="Odawara K."/>
            <person name="Tokuno Y."/>
            <person name="Nakashima Y."/>
            <person name="Matsushima N."/>
            <person name="Yasumura K."/>
            <person name="Tomita K."/>
            <person name="Ihara K."/>
            <person name="Fujii Y."/>
            <person name="Nakabeppu Y."/>
            <person name="Sekiguchi M."/>
            <person name="Fujii S."/>
        </authorList>
    </citation>
    <scope>X-RAY CRYSTALLOGRAPHY (2.3 ANGSTROMS)</scope>
    <scope>MUTAGENESIS</scope>
</reference>
<reference key="8">
    <citation type="journal article" date="1996" name="Cell">
        <title>Structural basis for the excision repair of alkylation-damaged DNA.</title>
        <authorList>
            <person name="Labahn J."/>
            <person name="Scharer O.D."/>
            <person name="Long A."/>
            <person name="Ezaz-Nikpay K."/>
            <person name="Verdine G.L."/>
            <person name="Ellenberger T.E."/>
        </authorList>
    </citation>
    <scope>X-RAY CRYSTALLOGRAPHY (1.8 ANGSTROMS)</scope>
</reference>
<dbReference type="EC" id="3.2.2.21"/>
<dbReference type="EMBL" id="K02498">
    <property type="protein sequence ID" value="AAA23430.1"/>
    <property type="molecule type" value="Genomic_DNA"/>
</dbReference>
<dbReference type="EMBL" id="U00096">
    <property type="protein sequence ID" value="AAC75129.1"/>
    <property type="molecule type" value="Genomic_DNA"/>
</dbReference>
<dbReference type="EMBL" id="AP009048">
    <property type="protein sequence ID" value="BAA15926.1"/>
    <property type="molecule type" value="Genomic_DNA"/>
</dbReference>
<dbReference type="EMBL" id="M13827">
    <property type="status" value="NOT_ANNOTATED_CDS"/>
    <property type="molecule type" value="Genomic_DNA"/>
</dbReference>
<dbReference type="PIR" id="A00904">
    <property type="entry name" value="DGECMA"/>
</dbReference>
<dbReference type="RefSeq" id="NP_416572.1">
    <property type="nucleotide sequence ID" value="NC_000913.3"/>
</dbReference>
<dbReference type="RefSeq" id="WP_000288420.1">
    <property type="nucleotide sequence ID" value="NZ_LN832404.1"/>
</dbReference>
<dbReference type="PDB" id="1DIZ">
    <property type="method" value="X-ray"/>
    <property type="resolution" value="2.50 A"/>
    <property type="chains" value="A/B=1-282"/>
</dbReference>
<dbReference type="PDB" id="1MPG">
    <property type="method" value="X-ray"/>
    <property type="resolution" value="1.80 A"/>
    <property type="chains" value="A/B=1-282"/>
</dbReference>
<dbReference type="PDB" id="1PVS">
    <property type="method" value="X-ray"/>
    <property type="resolution" value="2.40 A"/>
    <property type="chains" value="A/B=1-282"/>
</dbReference>
<dbReference type="PDB" id="3CVS">
    <property type="method" value="X-ray"/>
    <property type="resolution" value="2.40 A"/>
    <property type="chains" value="A/B/C/D=1-282"/>
</dbReference>
<dbReference type="PDB" id="3CVT">
    <property type="method" value="X-ray"/>
    <property type="resolution" value="2.50 A"/>
    <property type="chains" value="A/B/C/D=1-282"/>
</dbReference>
<dbReference type="PDB" id="3CW7">
    <property type="method" value="X-ray"/>
    <property type="resolution" value="2.30 A"/>
    <property type="chains" value="A/B/C/D=1-282"/>
</dbReference>
<dbReference type="PDB" id="3CWA">
    <property type="method" value="X-ray"/>
    <property type="resolution" value="2.40 A"/>
    <property type="chains" value="A/B/C/D=1-282"/>
</dbReference>
<dbReference type="PDB" id="3CWS">
    <property type="method" value="X-ray"/>
    <property type="resolution" value="2.30 A"/>
    <property type="chains" value="A/B/C/D=1-282"/>
</dbReference>
<dbReference type="PDB" id="3CWT">
    <property type="method" value="X-ray"/>
    <property type="resolution" value="2.30 A"/>
    <property type="chains" value="A/B/C/D=1-282"/>
</dbReference>
<dbReference type="PDB" id="3CWU">
    <property type="method" value="X-ray"/>
    <property type="resolution" value="2.80 A"/>
    <property type="chains" value="A/B/C/D=1-282"/>
</dbReference>
<dbReference type="PDB" id="3D4V">
    <property type="method" value="X-ray"/>
    <property type="resolution" value="2.90 A"/>
    <property type="chains" value="A/B/C/D=1-282"/>
</dbReference>
<dbReference type="PDB" id="3OGD">
    <property type="method" value="X-ray"/>
    <property type="resolution" value="2.80 A"/>
    <property type="chains" value="A=2-282"/>
</dbReference>
<dbReference type="PDB" id="3OH6">
    <property type="method" value="X-ray"/>
    <property type="resolution" value="2.89 A"/>
    <property type="chains" value="A=2-282"/>
</dbReference>
<dbReference type="PDB" id="3OH9">
    <property type="method" value="X-ray"/>
    <property type="resolution" value="2.80 A"/>
    <property type="chains" value="A=2-282"/>
</dbReference>
<dbReference type="PDBsum" id="1DIZ"/>
<dbReference type="PDBsum" id="1MPG"/>
<dbReference type="PDBsum" id="1PVS"/>
<dbReference type="PDBsum" id="3CVS"/>
<dbReference type="PDBsum" id="3CVT"/>
<dbReference type="PDBsum" id="3CW7"/>
<dbReference type="PDBsum" id="3CWA"/>
<dbReference type="PDBsum" id="3CWS"/>
<dbReference type="PDBsum" id="3CWT"/>
<dbReference type="PDBsum" id="3CWU"/>
<dbReference type="PDBsum" id="3D4V"/>
<dbReference type="PDBsum" id="3OGD"/>
<dbReference type="PDBsum" id="3OH6"/>
<dbReference type="PDBsum" id="3OH9"/>
<dbReference type="SMR" id="P04395"/>
<dbReference type="BioGRID" id="4259681">
    <property type="interactions" value="73"/>
</dbReference>
<dbReference type="DIP" id="DIP-9084N"/>
<dbReference type="FunCoup" id="P04395">
    <property type="interactions" value="258"/>
</dbReference>
<dbReference type="IntAct" id="P04395">
    <property type="interactions" value="19"/>
</dbReference>
<dbReference type="STRING" id="511145.b2068"/>
<dbReference type="jPOST" id="P04395"/>
<dbReference type="PaxDb" id="511145-b2068"/>
<dbReference type="EnsemblBacteria" id="AAC75129">
    <property type="protein sequence ID" value="AAC75129"/>
    <property type="gene ID" value="b2068"/>
</dbReference>
<dbReference type="GeneID" id="947371"/>
<dbReference type="KEGG" id="ecj:JW2053"/>
<dbReference type="KEGG" id="eco:b2068"/>
<dbReference type="KEGG" id="ecoc:C3026_11630"/>
<dbReference type="PATRIC" id="fig|1411691.4.peg.183"/>
<dbReference type="EchoBASE" id="EB1204"/>
<dbReference type="eggNOG" id="COG0122">
    <property type="taxonomic scope" value="Bacteria"/>
</dbReference>
<dbReference type="HOGENOM" id="CLU_000445_72_3_6"/>
<dbReference type="InParanoid" id="P04395"/>
<dbReference type="OMA" id="YLWRSIE"/>
<dbReference type="OrthoDB" id="9811249at2"/>
<dbReference type="PhylomeDB" id="P04395"/>
<dbReference type="BioCyc" id="EcoCyc:EG11222-MONOMER"/>
<dbReference type="BioCyc" id="MetaCyc:EG11222-MONOMER"/>
<dbReference type="BRENDA" id="3.2.2.21">
    <property type="organism ID" value="2026"/>
</dbReference>
<dbReference type="EvolutionaryTrace" id="P04395"/>
<dbReference type="PRO" id="PR:P04395"/>
<dbReference type="Proteomes" id="UP000000625">
    <property type="component" value="Chromosome"/>
</dbReference>
<dbReference type="GO" id="GO:0005737">
    <property type="term" value="C:cytoplasm"/>
    <property type="evidence" value="ECO:0000314"/>
    <property type="project" value="EcoliWiki"/>
</dbReference>
<dbReference type="GO" id="GO:0032993">
    <property type="term" value="C:protein-DNA complex"/>
    <property type="evidence" value="ECO:0000318"/>
    <property type="project" value="GO_Central"/>
</dbReference>
<dbReference type="GO" id="GO:0032131">
    <property type="term" value="F:alkylated DNA binding"/>
    <property type="evidence" value="ECO:0000318"/>
    <property type="project" value="GO_Central"/>
</dbReference>
<dbReference type="GO" id="GO:0003905">
    <property type="term" value="F:alkylbase DNA N-glycosylase activity"/>
    <property type="evidence" value="ECO:0000314"/>
    <property type="project" value="EcoliWiki"/>
</dbReference>
<dbReference type="GO" id="GO:0008725">
    <property type="term" value="F:DNA-3-methyladenine glycosylase activity"/>
    <property type="evidence" value="ECO:0000318"/>
    <property type="project" value="GO_Central"/>
</dbReference>
<dbReference type="GO" id="GO:0043916">
    <property type="term" value="F:DNA-7-methylguanine glycosylase activity"/>
    <property type="evidence" value="ECO:0000318"/>
    <property type="project" value="GO_Central"/>
</dbReference>
<dbReference type="GO" id="GO:0006284">
    <property type="term" value="P:base-excision repair"/>
    <property type="evidence" value="ECO:0000314"/>
    <property type="project" value="EcoliWiki"/>
</dbReference>
<dbReference type="GO" id="GO:0006285">
    <property type="term" value="P:base-excision repair, AP site formation"/>
    <property type="evidence" value="ECO:0000318"/>
    <property type="project" value="GO_Central"/>
</dbReference>
<dbReference type="GO" id="GO:0006307">
    <property type="term" value="P:DNA alkylation repair"/>
    <property type="evidence" value="ECO:0000315"/>
    <property type="project" value="EcoliWiki"/>
</dbReference>
<dbReference type="GO" id="GO:0006974">
    <property type="term" value="P:DNA damage response"/>
    <property type="evidence" value="ECO:0000315"/>
    <property type="project" value="EcoliWiki"/>
</dbReference>
<dbReference type="GO" id="GO:0006281">
    <property type="term" value="P:DNA repair"/>
    <property type="evidence" value="ECO:0000314"/>
    <property type="project" value="EcoliWiki"/>
</dbReference>
<dbReference type="CDD" id="cd00056">
    <property type="entry name" value="ENDO3c"/>
    <property type="match status" value="1"/>
</dbReference>
<dbReference type="FunFam" id="1.10.1670.10:FF:000007">
    <property type="entry name" value="DNA-3-methyladenine glycosylase 2"/>
    <property type="match status" value="1"/>
</dbReference>
<dbReference type="FunFam" id="1.10.340.30:FF:000008">
    <property type="entry name" value="DNA-3-methyladenine glycosylase 2"/>
    <property type="match status" value="1"/>
</dbReference>
<dbReference type="FunFam" id="3.30.310.20:FF:000002">
    <property type="entry name" value="DNA-3-methyladenine glycosylase 2"/>
    <property type="match status" value="1"/>
</dbReference>
<dbReference type="Gene3D" id="3.30.310.20">
    <property type="entry name" value="DNA-3-methyladenine glycosylase AlkA, N-terminal domain"/>
    <property type="match status" value="1"/>
</dbReference>
<dbReference type="Gene3D" id="1.10.1670.10">
    <property type="entry name" value="Helix-hairpin-Helix base-excision DNA repair enzymes (C-terminal)"/>
    <property type="match status" value="1"/>
</dbReference>
<dbReference type="Gene3D" id="1.10.340.30">
    <property type="entry name" value="Hypothetical protein, domain 2"/>
    <property type="match status" value="1"/>
</dbReference>
<dbReference type="InterPro" id="IPR010316">
    <property type="entry name" value="AlkA_N"/>
</dbReference>
<dbReference type="InterPro" id="IPR037046">
    <property type="entry name" value="AlkA_N_sf"/>
</dbReference>
<dbReference type="InterPro" id="IPR051912">
    <property type="entry name" value="Alkylbase_DNA_Glycosylase/TA"/>
</dbReference>
<dbReference type="InterPro" id="IPR000035">
    <property type="entry name" value="Alkylbase_DNA_glycsylse_CS"/>
</dbReference>
<dbReference type="InterPro" id="IPR011257">
    <property type="entry name" value="DNA_glycosylase"/>
</dbReference>
<dbReference type="InterPro" id="IPR003265">
    <property type="entry name" value="HhH-GPD_domain"/>
</dbReference>
<dbReference type="InterPro" id="IPR023170">
    <property type="entry name" value="HhH_base_excis_C"/>
</dbReference>
<dbReference type="NCBIfam" id="NF007641">
    <property type="entry name" value="PRK10308.1"/>
    <property type="match status" value="1"/>
</dbReference>
<dbReference type="PANTHER" id="PTHR43003">
    <property type="entry name" value="DNA-3-METHYLADENINE GLYCOSYLASE"/>
    <property type="match status" value="1"/>
</dbReference>
<dbReference type="PANTHER" id="PTHR43003:SF13">
    <property type="entry name" value="DNA-3-METHYLADENINE GLYCOSYLASE 2"/>
    <property type="match status" value="1"/>
</dbReference>
<dbReference type="Pfam" id="PF06029">
    <property type="entry name" value="AlkA_N"/>
    <property type="match status" value="1"/>
</dbReference>
<dbReference type="Pfam" id="PF00730">
    <property type="entry name" value="HhH-GPD"/>
    <property type="match status" value="1"/>
</dbReference>
<dbReference type="SMART" id="SM01009">
    <property type="entry name" value="AlkA_N"/>
    <property type="match status" value="1"/>
</dbReference>
<dbReference type="SMART" id="SM00478">
    <property type="entry name" value="ENDO3c"/>
    <property type="match status" value="1"/>
</dbReference>
<dbReference type="SUPFAM" id="SSF48150">
    <property type="entry name" value="DNA-glycosylase"/>
    <property type="match status" value="1"/>
</dbReference>
<dbReference type="SUPFAM" id="SSF55945">
    <property type="entry name" value="TATA-box binding protein-like"/>
    <property type="match status" value="1"/>
</dbReference>
<dbReference type="PROSITE" id="PS00516">
    <property type="entry name" value="ALKYLBASE_DNA_GLYCOS"/>
    <property type="match status" value="1"/>
</dbReference>
<accession>P04395</accession>
<keyword id="KW-0002">3D-structure</keyword>
<keyword id="KW-0903">Direct protein sequencing</keyword>
<keyword id="KW-0227">DNA damage</keyword>
<keyword id="KW-0234">DNA repair</keyword>
<keyword id="KW-0378">Hydrolase</keyword>
<keyword id="KW-1185">Reference proteome</keyword>